<evidence type="ECO:0000255" key="1">
    <source>
        <dbReference type="HAMAP-Rule" id="MF_01331"/>
    </source>
</evidence>
<evidence type="ECO:0000305" key="2"/>
<keyword id="KW-0687">Ribonucleoprotein</keyword>
<keyword id="KW-0689">Ribosomal protein</keyword>
<keyword id="KW-0694">RNA-binding</keyword>
<keyword id="KW-0699">rRNA-binding</keyword>
<gene>
    <name evidence="1" type="primary">rplV</name>
    <name type="ordered locus">SPCG_0223</name>
</gene>
<feature type="chain" id="PRO_1000142317" description="Large ribosomal subunit protein uL22">
    <location>
        <begin position="1"/>
        <end position="114"/>
    </location>
</feature>
<accession>B2IS45</accession>
<organism>
    <name type="scientific">Streptococcus pneumoniae (strain CGSP14)</name>
    <dbReference type="NCBI Taxonomy" id="516950"/>
    <lineage>
        <taxon>Bacteria</taxon>
        <taxon>Bacillati</taxon>
        <taxon>Bacillota</taxon>
        <taxon>Bacilli</taxon>
        <taxon>Lactobacillales</taxon>
        <taxon>Streptococcaceae</taxon>
        <taxon>Streptococcus</taxon>
    </lineage>
</organism>
<name>RL22_STRPS</name>
<sequence>MAEITSAKAMARTVRVSPRKSRLVLDNIRGKSVADAIAILTFTPNKAAEIILKVLNSAVANAENNFGLDKANLVVSEAFANEGPTMKRFRPRAKGSASPINKRTAHITVAVAEK</sequence>
<reference key="1">
    <citation type="journal article" date="2009" name="BMC Genomics">
        <title>Genome evolution driven by host adaptations results in a more virulent and antimicrobial-resistant Streptococcus pneumoniae serotype 14.</title>
        <authorList>
            <person name="Ding F."/>
            <person name="Tang P."/>
            <person name="Hsu M.-H."/>
            <person name="Cui P."/>
            <person name="Hu S."/>
            <person name="Yu J."/>
            <person name="Chiu C.-H."/>
        </authorList>
    </citation>
    <scope>NUCLEOTIDE SEQUENCE [LARGE SCALE GENOMIC DNA]</scope>
    <source>
        <strain>CGSP14</strain>
    </source>
</reference>
<protein>
    <recommendedName>
        <fullName evidence="1">Large ribosomal subunit protein uL22</fullName>
    </recommendedName>
    <alternativeName>
        <fullName evidence="2">50S ribosomal protein L22</fullName>
    </alternativeName>
</protein>
<proteinExistence type="inferred from homology"/>
<dbReference type="EMBL" id="CP001033">
    <property type="protein sequence ID" value="ACB89475.1"/>
    <property type="molecule type" value="Genomic_DNA"/>
</dbReference>
<dbReference type="RefSeq" id="WP_000818137.1">
    <property type="nucleotide sequence ID" value="NC_010582.1"/>
</dbReference>
<dbReference type="SMR" id="B2IS45"/>
<dbReference type="GeneID" id="93738962"/>
<dbReference type="KEGG" id="spw:SPCG_0223"/>
<dbReference type="HOGENOM" id="CLU_083987_3_3_9"/>
<dbReference type="GO" id="GO:0022625">
    <property type="term" value="C:cytosolic large ribosomal subunit"/>
    <property type="evidence" value="ECO:0007669"/>
    <property type="project" value="TreeGrafter"/>
</dbReference>
<dbReference type="GO" id="GO:0019843">
    <property type="term" value="F:rRNA binding"/>
    <property type="evidence" value="ECO:0007669"/>
    <property type="project" value="UniProtKB-UniRule"/>
</dbReference>
<dbReference type="GO" id="GO:0003735">
    <property type="term" value="F:structural constituent of ribosome"/>
    <property type="evidence" value="ECO:0007669"/>
    <property type="project" value="InterPro"/>
</dbReference>
<dbReference type="GO" id="GO:0006412">
    <property type="term" value="P:translation"/>
    <property type="evidence" value="ECO:0007669"/>
    <property type="project" value="UniProtKB-UniRule"/>
</dbReference>
<dbReference type="CDD" id="cd00336">
    <property type="entry name" value="Ribosomal_L22"/>
    <property type="match status" value="1"/>
</dbReference>
<dbReference type="FunFam" id="3.90.470.10:FF:000001">
    <property type="entry name" value="50S ribosomal protein L22"/>
    <property type="match status" value="1"/>
</dbReference>
<dbReference type="Gene3D" id="3.90.470.10">
    <property type="entry name" value="Ribosomal protein L22/L17"/>
    <property type="match status" value="1"/>
</dbReference>
<dbReference type="HAMAP" id="MF_01331_B">
    <property type="entry name" value="Ribosomal_uL22_B"/>
    <property type="match status" value="1"/>
</dbReference>
<dbReference type="InterPro" id="IPR001063">
    <property type="entry name" value="Ribosomal_uL22"/>
</dbReference>
<dbReference type="InterPro" id="IPR005727">
    <property type="entry name" value="Ribosomal_uL22_bac/chlpt-type"/>
</dbReference>
<dbReference type="InterPro" id="IPR047867">
    <property type="entry name" value="Ribosomal_uL22_bac/org-type"/>
</dbReference>
<dbReference type="InterPro" id="IPR018260">
    <property type="entry name" value="Ribosomal_uL22_CS"/>
</dbReference>
<dbReference type="InterPro" id="IPR036394">
    <property type="entry name" value="Ribosomal_uL22_sf"/>
</dbReference>
<dbReference type="NCBIfam" id="TIGR01044">
    <property type="entry name" value="rplV_bact"/>
    <property type="match status" value="1"/>
</dbReference>
<dbReference type="PANTHER" id="PTHR13501">
    <property type="entry name" value="CHLOROPLAST 50S RIBOSOMAL PROTEIN L22-RELATED"/>
    <property type="match status" value="1"/>
</dbReference>
<dbReference type="PANTHER" id="PTHR13501:SF8">
    <property type="entry name" value="LARGE RIBOSOMAL SUBUNIT PROTEIN UL22M"/>
    <property type="match status" value="1"/>
</dbReference>
<dbReference type="Pfam" id="PF00237">
    <property type="entry name" value="Ribosomal_L22"/>
    <property type="match status" value="1"/>
</dbReference>
<dbReference type="SUPFAM" id="SSF54843">
    <property type="entry name" value="Ribosomal protein L22"/>
    <property type="match status" value="1"/>
</dbReference>
<dbReference type="PROSITE" id="PS00464">
    <property type="entry name" value="RIBOSOMAL_L22"/>
    <property type="match status" value="1"/>
</dbReference>
<comment type="function">
    <text evidence="1">This protein binds specifically to 23S rRNA; its binding is stimulated by other ribosomal proteins, e.g. L4, L17, and L20. It is important during the early stages of 50S assembly. It makes multiple contacts with different domains of the 23S rRNA in the assembled 50S subunit and ribosome (By similarity).</text>
</comment>
<comment type="function">
    <text evidence="1">The globular domain of the protein is located near the polypeptide exit tunnel on the outside of the subunit, while an extended beta-hairpin is found that lines the wall of the exit tunnel in the center of the 70S ribosome.</text>
</comment>
<comment type="subunit">
    <text evidence="1">Part of the 50S ribosomal subunit.</text>
</comment>
<comment type="similarity">
    <text evidence="1">Belongs to the universal ribosomal protein uL22 family.</text>
</comment>